<name>HIS6_SHEB5</name>
<comment type="function">
    <text evidence="1">IGPS catalyzes the conversion of PRFAR and glutamine to IGP, AICAR and glutamate. The HisF subunit catalyzes the cyclization activity that produces IGP and AICAR from PRFAR using the ammonia provided by the HisH subunit.</text>
</comment>
<comment type="catalytic activity">
    <reaction evidence="1">
        <text>5-[(5-phospho-1-deoxy-D-ribulos-1-ylimino)methylamino]-1-(5-phospho-beta-D-ribosyl)imidazole-4-carboxamide + L-glutamine = D-erythro-1-(imidazol-4-yl)glycerol 3-phosphate + 5-amino-1-(5-phospho-beta-D-ribosyl)imidazole-4-carboxamide + L-glutamate + H(+)</text>
        <dbReference type="Rhea" id="RHEA:24793"/>
        <dbReference type="ChEBI" id="CHEBI:15378"/>
        <dbReference type="ChEBI" id="CHEBI:29985"/>
        <dbReference type="ChEBI" id="CHEBI:58278"/>
        <dbReference type="ChEBI" id="CHEBI:58359"/>
        <dbReference type="ChEBI" id="CHEBI:58475"/>
        <dbReference type="ChEBI" id="CHEBI:58525"/>
        <dbReference type="EC" id="4.3.2.10"/>
    </reaction>
</comment>
<comment type="pathway">
    <text evidence="1">Amino-acid biosynthesis; L-histidine biosynthesis; L-histidine from 5-phospho-alpha-D-ribose 1-diphosphate: step 5/9.</text>
</comment>
<comment type="subunit">
    <text evidence="1">Heterodimer of HisH and HisF.</text>
</comment>
<comment type="subcellular location">
    <subcellularLocation>
        <location evidence="1">Cytoplasm</location>
    </subcellularLocation>
</comment>
<comment type="similarity">
    <text evidence="1">Belongs to the HisA/HisF family.</text>
</comment>
<sequence length="257" mass="28106">MLAKRLVPCLDVKDGKVVKGVQFRNHEIVGDIVPLAARYAEEGADELVFYDITASAHERVVDKSWVSRVAEQIDIPFCVAGGIKTISQARELLAFGADKISINSPALTDPSLISRLQDEFGRQCIVIGIDSFFDATSNSYKVKQFTGDEAATKDTQWFTQDWVEEVQKRGCGEIVLNVMNQDGVRGGYDIKQLSLVRAICDVPLIASGGAGTMAHFRDVFIEAKVDAALAASVFHKAIINIGELKAYLAAEDIAIRR</sequence>
<keyword id="KW-0028">Amino-acid biosynthesis</keyword>
<keyword id="KW-0963">Cytoplasm</keyword>
<keyword id="KW-0368">Histidine biosynthesis</keyword>
<keyword id="KW-0456">Lyase</keyword>
<keyword id="KW-1185">Reference proteome</keyword>
<reference key="1">
    <citation type="submission" date="2007-02" db="EMBL/GenBank/DDBJ databases">
        <title>Complete sequence of chromosome of Shewanella baltica OS155.</title>
        <authorList>
            <consortium name="US DOE Joint Genome Institute"/>
            <person name="Copeland A."/>
            <person name="Lucas S."/>
            <person name="Lapidus A."/>
            <person name="Barry K."/>
            <person name="Detter J.C."/>
            <person name="Glavina del Rio T."/>
            <person name="Hammon N."/>
            <person name="Israni S."/>
            <person name="Dalin E."/>
            <person name="Tice H."/>
            <person name="Pitluck S."/>
            <person name="Sims D.R."/>
            <person name="Brettin T."/>
            <person name="Bruce D."/>
            <person name="Han C."/>
            <person name="Tapia R."/>
            <person name="Brainard J."/>
            <person name="Schmutz J."/>
            <person name="Larimer F."/>
            <person name="Land M."/>
            <person name="Hauser L."/>
            <person name="Kyrpides N."/>
            <person name="Mikhailova N."/>
            <person name="Brettar I."/>
            <person name="Klappenbach J."/>
            <person name="Konstantinidis K."/>
            <person name="Rodrigues J."/>
            <person name="Tiedje J."/>
            <person name="Richardson P."/>
        </authorList>
    </citation>
    <scope>NUCLEOTIDE SEQUENCE [LARGE SCALE GENOMIC DNA]</scope>
    <source>
        <strain>OS155 / ATCC BAA-1091</strain>
    </source>
</reference>
<dbReference type="EC" id="4.3.2.10" evidence="1"/>
<dbReference type="EMBL" id="CP000563">
    <property type="protein sequence ID" value="ABN61924.1"/>
    <property type="molecule type" value="Genomic_DNA"/>
</dbReference>
<dbReference type="RefSeq" id="WP_011846973.1">
    <property type="nucleotide sequence ID" value="NC_009052.1"/>
</dbReference>
<dbReference type="SMR" id="A3D5B1"/>
<dbReference type="STRING" id="325240.Sbal_2431"/>
<dbReference type="KEGG" id="sbl:Sbal_2431"/>
<dbReference type="HOGENOM" id="CLU_048577_4_0_6"/>
<dbReference type="OrthoDB" id="9781903at2"/>
<dbReference type="UniPathway" id="UPA00031">
    <property type="reaction ID" value="UER00010"/>
</dbReference>
<dbReference type="Proteomes" id="UP000001557">
    <property type="component" value="Chromosome"/>
</dbReference>
<dbReference type="GO" id="GO:0005737">
    <property type="term" value="C:cytoplasm"/>
    <property type="evidence" value="ECO:0007669"/>
    <property type="project" value="UniProtKB-SubCell"/>
</dbReference>
<dbReference type="GO" id="GO:0000107">
    <property type="term" value="F:imidazoleglycerol-phosphate synthase activity"/>
    <property type="evidence" value="ECO:0007669"/>
    <property type="project" value="UniProtKB-UniRule"/>
</dbReference>
<dbReference type="GO" id="GO:0016829">
    <property type="term" value="F:lyase activity"/>
    <property type="evidence" value="ECO:0007669"/>
    <property type="project" value="UniProtKB-KW"/>
</dbReference>
<dbReference type="GO" id="GO:0000105">
    <property type="term" value="P:L-histidine biosynthetic process"/>
    <property type="evidence" value="ECO:0007669"/>
    <property type="project" value="UniProtKB-UniRule"/>
</dbReference>
<dbReference type="CDD" id="cd04731">
    <property type="entry name" value="HisF"/>
    <property type="match status" value="1"/>
</dbReference>
<dbReference type="FunFam" id="3.20.20.70:FF:000006">
    <property type="entry name" value="Imidazole glycerol phosphate synthase subunit HisF"/>
    <property type="match status" value="1"/>
</dbReference>
<dbReference type="Gene3D" id="3.20.20.70">
    <property type="entry name" value="Aldolase class I"/>
    <property type="match status" value="1"/>
</dbReference>
<dbReference type="HAMAP" id="MF_01013">
    <property type="entry name" value="HisF"/>
    <property type="match status" value="1"/>
</dbReference>
<dbReference type="InterPro" id="IPR013785">
    <property type="entry name" value="Aldolase_TIM"/>
</dbReference>
<dbReference type="InterPro" id="IPR006062">
    <property type="entry name" value="His_biosynth"/>
</dbReference>
<dbReference type="InterPro" id="IPR004651">
    <property type="entry name" value="HisF"/>
</dbReference>
<dbReference type="InterPro" id="IPR050064">
    <property type="entry name" value="IGPS_HisA/HisF"/>
</dbReference>
<dbReference type="InterPro" id="IPR011060">
    <property type="entry name" value="RibuloseP-bd_barrel"/>
</dbReference>
<dbReference type="NCBIfam" id="TIGR00735">
    <property type="entry name" value="hisF"/>
    <property type="match status" value="1"/>
</dbReference>
<dbReference type="PANTHER" id="PTHR21235:SF2">
    <property type="entry name" value="IMIDAZOLE GLYCEROL PHOSPHATE SYNTHASE HISHF"/>
    <property type="match status" value="1"/>
</dbReference>
<dbReference type="PANTHER" id="PTHR21235">
    <property type="entry name" value="IMIDAZOLE GLYCEROL PHOSPHATE SYNTHASE SUBUNIT HISF/H IGP SYNTHASE SUBUNIT HISF/H"/>
    <property type="match status" value="1"/>
</dbReference>
<dbReference type="Pfam" id="PF00977">
    <property type="entry name" value="His_biosynth"/>
    <property type="match status" value="1"/>
</dbReference>
<dbReference type="SUPFAM" id="SSF51366">
    <property type="entry name" value="Ribulose-phoshate binding barrel"/>
    <property type="match status" value="1"/>
</dbReference>
<protein>
    <recommendedName>
        <fullName evidence="1">Imidazole glycerol phosphate synthase subunit HisF</fullName>
        <ecNumber evidence="1">4.3.2.10</ecNumber>
    </recommendedName>
    <alternativeName>
        <fullName evidence="1">IGP synthase cyclase subunit</fullName>
    </alternativeName>
    <alternativeName>
        <fullName evidence="1">IGP synthase subunit HisF</fullName>
    </alternativeName>
    <alternativeName>
        <fullName evidence="1">ImGP synthase subunit HisF</fullName>
        <shortName evidence="1">IGPS subunit HisF</shortName>
    </alternativeName>
</protein>
<accession>A3D5B1</accession>
<evidence type="ECO:0000255" key="1">
    <source>
        <dbReference type="HAMAP-Rule" id="MF_01013"/>
    </source>
</evidence>
<gene>
    <name evidence="1" type="primary">hisF</name>
    <name type="ordered locus">Sbal_2431</name>
</gene>
<proteinExistence type="inferred from homology"/>
<feature type="chain" id="PRO_1000063142" description="Imidazole glycerol phosphate synthase subunit HisF">
    <location>
        <begin position="1"/>
        <end position="257"/>
    </location>
</feature>
<feature type="active site" evidence="1">
    <location>
        <position position="11"/>
    </location>
</feature>
<feature type="active site" evidence="1">
    <location>
        <position position="130"/>
    </location>
</feature>
<organism>
    <name type="scientific">Shewanella baltica (strain OS155 / ATCC BAA-1091)</name>
    <dbReference type="NCBI Taxonomy" id="325240"/>
    <lineage>
        <taxon>Bacteria</taxon>
        <taxon>Pseudomonadati</taxon>
        <taxon>Pseudomonadota</taxon>
        <taxon>Gammaproteobacteria</taxon>
        <taxon>Alteromonadales</taxon>
        <taxon>Shewanellaceae</taxon>
        <taxon>Shewanella</taxon>
    </lineage>
</organism>